<organism>
    <name type="scientific">Xanthomonas axonopodis pv. citri (strain 306)</name>
    <dbReference type="NCBI Taxonomy" id="190486"/>
    <lineage>
        <taxon>Bacteria</taxon>
        <taxon>Pseudomonadati</taxon>
        <taxon>Pseudomonadota</taxon>
        <taxon>Gammaproteobacteria</taxon>
        <taxon>Lysobacterales</taxon>
        <taxon>Lysobacteraceae</taxon>
        <taxon>Xanthomonas</taxon>
    </lineage>
</organism>
<accession>Q8PLL4</accession>
<gene>
    <name evidence="1" type="primary">folE2</name>
    <name type="ordered locus">XAC1781</name>
</gene>
<protein>
    <recommendedName>
        <fullName evidence="1">GTP cyclohydrolase FolE2</fullName>
        <ecNumber evidence="1">3.5.4.16</ecNumber>
    </recommendedName>
</protein>
<reference key="1">
    <citation type="journal article" date="2002" name="Nature">
        <title>Comparison of the genomes of two Xanthomonas pathogens with differing host specificities.</title>
        <authorList>
            <person name="da Silva A.C.R."/>
            <person name="Ferro J.A."/>
            <person name="Reinach F.C."/>
            <person name="Farah C.S."/>
            <person name="Furlan L.R."/>
            <person name="Quaggio R.B."/>
            <person name="Monteiro-Vitorello C.B."/>
            <person name="Van Sluys M.A."/>
            <person name="Almeida N.F. Jr."/>
            <person name="Alves L.M.C."/>
            <person name="do Amaral A.M."/>
            <person name="Bertolini M.C."/>
            <person name="Camargo L.E.A."/>
            <person name="Camarotte G."/>
            <person name="Cannavan F."/>
            <person name="Cardozo J."/>
            <person name="Chambergo F."/>
            <person name="Ciapina L.P."/>
            <person name="Cicarelli R.M.B."/>
            <person name="Coutinho L.L."/>
            <person name="Cursino-Santos J.R."/>
            <person name="El-Dorry H."/>
            <person name="Faria J.B."/>
            <person name="Ferreira A.J.S."/>
            <person name="Ferreira R.C.C."/>
            <person name="Ferro M.I.T."/>
            <person name="Formighieri E.F."/>
            <person name="Franco M.C."/>
            <person name="Greggio C.C."/>
            <person name="Gruber A."/>
            <person name="Katsuyama A.M."/>
            <person name="Kishi L.T."/>
            <person name="Leite R.P."/>
            <person name="Lemos E.G.M."/>
            <person name="Lemos M.V.F."/>
            <person name="Locali E.C."/>
            <person name="Machado M.A."/>
            <person name="Madeira A.M.B.N."/>
            <person name="Martinez-Rossi N.M."/>
            <person name="Martins E.C."/>
            <person name="Meidanis J."/>
            <person name="Menck C.F.M."/>
            <person name="Miyaki C.Y."/>
            <person name="Moon D.H."/>
            <person name="Moreira L.M."/>
            <person name="Novo M.T.M."/>
            <person name="Okura V.K."/>
            <person name="Oliveira M.C."/>
            <person name="Oliveira V.R."/>
            <person name="Pereira H.A."/>
            <person name="Rossi A."/>
            <person name="Sena J.A.D."/>
            <person name="Silva C."/>
            <person name="de Souza R.F."/>
            <person name="Spinola L.A.F."/>
            <person name="Takita M.A."/>
            <person name="Tamura R.E."/>
            <person name="Teixeira E.C."/>
            <person name="Tezza R.I.D."/>
            <person name="Trindade dos Santos M."/>
            <person name="Truffi D."/>
            <person name="Tsai S.M."/>
            <person name="White F.F."/>
            <person name="Setubal J.C."/>
            <person name="Kitajima J.P."/>
        </authorList>
    </citation>
    <scope>NUCLEOTIDE SEQUENCE [LARGE SCALE GENOMIC DNA]</scope>
    <source>
        <strain>306</strain>
    </source>
</reference>
<keyword id="KW-0378">Hydrolase</keyword>
<name>GCH4_XANAC</name>
<comment type="function">
    <text evidence="1">Converts GTP to 7,8-dihydroneopterin triphosphate.</text>
</comment>
<comment type="catalytic activity">
    <reaction evidence="1">
        <text>GTP + H2O = 7,8-dihydroneopterin 3'-triphosphate + formate + H(+)</text>
        <dbReference type="Rhea" id="RHEA:17473"/>
        <dbReference type="ChEBI" id="CHEBI:15377"/>
        <dbReference type="ChEBI" id="CHEBI:15378"/>
        <dbReference type="ChEBI" id="CHEBI:15740"/>
        <dbReference type="ChEBI" id="CHEBI:37565"/>
        <dbReference type="ChEBI" id="CHEBI:58462"/>
        <dbReference type="EC" id="3.5.4.16"/>
    </reaction>
</comment>
<comment type="pathway">
    <text evidence="1">Cofactor biosynthesis; 7,8-dihydroneopterin triphosphate biosynthesis; 7,8-dihydroneopterin triphosphate from GTP: step 1/1.</text>
</comment>
<comment type="similarity">
    <text evidence="1">Belongs to the GTP cyclohydrolase IV family.</text>
</comment>
<proteinExistence type="inferred from homology"/>
<evidence type="ECO:0000255" key="1">
    <source>
        <dbReference type="HAMAP-Rule" id="MF_01527"/>
    </source>
</evidence>
<sequence>MSPTLPDVAVTEPSTLSAPLRWVGMQDIAIPVQLETGSSQLAARASVQVDLPRAELKGIHMSRLYRLLDTHLQQPLSPAMLSQLLQALIDSHADCASRAARLTLSFELMLRTPALRSEGLSGWRAYPVHIAAQCRAGRTTIQLQIEVLYASTCPCSAALSRQLLSDAFVQQHAGRDTLPLRDVVQWLQDHGTYATPHSQRSVAQVRVELPADAQRLAIQQLVGLCEQALATPVQAAVRRPDEQAFARLNGANLMCVEDAARRLRKPLAEHYAAFHVAVRHLESLHAHDAVAETGSDDAVLGPTTM</sequence>
<feature type="chain" id="PRO_0000147733" description="GTP cyclohydrolase FolE2">
    <location>
        <begin position="1"/>
        <end position="305"/>
    </location>
</feature>
<feature type="site" description="May be catalytically important" evidence="1">
    <location>
        <position position="153"/>
    </location>
</feature>
<dbReference type="EC" id="3.5.4.16" evidence="1"/>
<dbReference type="EMBL" id="AE008923">
    <property type="protein sequence ID" value="AAM36645.1"/>
    <property type="molecule type" value="Genomic_DNA"/>
</dbReference>
<dbReference type="RefSeq" id="WP_011051138.1">
    <property type="nucleotide sequence ID" value="NC_003919.1"/>
</dbReference>
<dbReference type="SMR" id="Q8PLL4"/>
<dbReference type="GeneID" id="66910929"/>
<dbReference type="KEGG" id="xac:XAC1781"/>
<dbReference type="eggNOG" id="COG1469">
    <property type="taxonomic scope" value="Bacteria"/>
</dbReference>
<dbReference type="HOGENOM" id="CLU_062816_0_0_6"/>
<dbReference type="UniPathway" id="UPA00848">
    <property type="reaction ID" value="UER00151"/>
</dbReference>
<dbReference type="Proteomes" id="UP000000576">
    <property type="component" value="Chromosome"/>
</dbReference>
<dbReference type="GO" id="GO:0003934">
    <property type="term" value="F:GTP cyclohydrolase I activity"/>
    <property type="evidence" value="ECO:0007669"/>
    <property type="project" value="UniProtKB-UniRule"/>
</dbReference>
<dbReference type="GO" id="GO:0046654">
    <property type="term" value="P:tetrahydrofolate biosynthetic process"/>
    <property type="evidence" value="ECO:0007669"/>
    <property type="project" value="UniProtKB-UniRule"/>
</dbReference>
<dbReference type="Gene3D" id="3.10.270.10">
    <property type="entry name" value="Urate Oxidase"/>
    <property type="match status" value="1"/>
</dbReference>
<dbReference type="HAMAP" id="MF_01527_B">
    <property type="entry name" value="GTP_cyclohydrol_B"/>
    <property type="match status" value="1"/>
</dbReference>
<dbReference type="InterPro" id="IPR022838">
    <property type="entry name" value="GTP_cyclohydrolase_FolE2"/>
</dbReference>
<dbReference type="InterPro" id="IPR003801">
    <property type="entry name" value="GTP_cyclohydrolase_FolE2/MptA"/>
</dbReference>
<dbReference type="NCBIfam" id="NF010200">
    <property type="entry name" value="PRK13674.1-1"/>
    <property type="match status" value="1"/>
</dbReference>
<dbReference type="PANTHER" id="PTHR36445">
    <property type="entry name" value="GTP CYCLOHYDROLASE MPTA"/>
    <property type="match status" value="1"/>
</dbReference>
<dbReference type="PANTHER" id="PTHR36445:SF1">
    <property type="entry name" value="GTP CYCLOHYDROLASE MPTA"/>
    <property type="match status" value="1"/>
</dbReference>
<dbReference type="Pfam" id="PF02649">
    <property type="entry name" value="GCHY-1"/>
    <property type="match status" value="1"/>
</dbReference>